<evidence type="ECO:0000250" key="1">
    <source>
        <dbReference type="UniProtKB" id="D2XUU4"/>
    </source>
</evidence>
<evidence type="ECO:0000255" key="2"/>
<evidence type="ECO:0000269" key="3">
    <source>
    </source>
</evidence>
<evidence type="ECO:0000303" key="4">
    <source>
    </source>
</evidence>
<evidence type="ECO:0000305" key="5"/>
<evidence type="ECO:0000312" key="6">
    <source>
        <dbReference type="EMBL" id="AGN53417.1"/>
    </source>
</evidence>
<name>ARM60_HYDVU</name>
<reference evidence="6" key="1">
    <citation type="journal article" date="2013" name="Proc. Natl. Acad. Sci. U.S.A.">
        <title>Distinct antimicrobial peptide expression determines host species-specific bacterial associations.</title>
        <authorList>
            <person name="Franzenburg S."/>
            <person name="Walter J."/>
            <person name="Kunzel S."/>
            <person name="Wang J."/>
            <person name="Baines J.F."/>
            <person name="Bosch T.C."/>
            <person name="Fraune S."/>
        </authorList>
    </citation>
    <scope>NUCLEOTIDE SEQUENCE [MRNA]</scope>
    <scope>TISSUE SPECIFICITY</scope>
    <source>
        <strain>AEP</strain>
    </source>
</reference>
<dbReference type="EMBL" id="KC701510">
    <property type="protein sequence ID" value="AGN53417.1"/>
    <property type="molecule type" value="mRNA"/>
</dbReference>
<dbReference type="RefSeq" id="XP_065653819.1">
    <property type="nucleotide sequence ID" value="XM_065797747.1"/>
</dbReference>
<dbReference type="RefSeq" id="XP_065653820.1">
    <property type="nucleotide sequence ID" value="XM_065797748.1"/>
</dbReference>
<dbReference type="GeneID" id="136080727"/>
<dbReference type="Proteomes" id="UP000694840">
    <property type="component" value="Unplaced"/>
</dbReference>
<dbReference type="GO" id="GO:0005576">
    <property type="term" value="C:extracellular region"/>
    <property type="evidence" value="ECO:0007669"/>
    <property type="project" value="UniProtKB-SubCell"/>
</dbReference>
<accession>R9UC10</accession>
<organism>
    <name type="scientific">Hydra vulgaris</name>
    <name type="common">Hydra</name>
    <name type="synonym">Hydra attenuata</name>
    <dbReference type="NCBI Taxonomy" id="6087"/>
    <lineage>
        <taxon>Eukaryota</taxon>
        <taxon>Metazoa</taxon>
        <taxon>Cnidaria</taxon>
        <taxon>Hydrozoa</taxon>
        <taxon>Hydroidolina</taxon>
        <taxon>Anthoathecata</taxon>
        <taxon>Aplanulata</taxon>
        <taxon>Hydridae</taxon>
        <taxon>Hydra</taxon>
    </lineage>
</organism>
<proteinExistence type="evidence at transcript level"/>
<comment type="function">
    <text evidence="1">Antimicrobial peptide with a broad-spectrum antimicrobial activity. Keeps its antibacterial activity under a wide range of salt concentrations that mimic physiological conditions of human blood, which is surprising, since Hydra is an obligate freshwater animal with nearly no salt tolerance. Does not affect red blood cells.</text>
</comment>
<comment type="subcellular location">
    <subcellularLocation>
        <location evidence="1">Secreted</location>
    </subcellularLocation>
    <subcellularLocation>
        <location evidence="1">Target cell membrane</location>
    </subcellularLocation>
</comment>
<comment type="tissue specificity">
    <text evidence="3">Expressed in the ectodermal epithelium.</text>
</comment>
<comment type="similarity">
    <text evidence="5">Belongs to the arminin family.</text>
</comment>
<protein>
    <recommendedName>
        <fullName evidence="4">Arminin 6560</fullName>
    </recommendedName>
</protein>
<keyword id="KW-0027">Amidation</keyword>
<keyword id="KW-0044">Antibiotic</keyword>
<keyword id="KW-0929">Antimicrobial</keyword>
<keyword id="KW-0391">Immunity</keyword>
<keyword id="KW-0399">Innate immunity</keyword>
<keyword id="KW-0472">Membrane</keyword>
<keyword id="KW-1185">Reference proteome</keyword>
<keyword id="KW-0964">Secreted</keyword>
<keyword id="KW-0732">Signal</keyword>
<keyword id="KW-1052">Target cell membrane</keyword>
<keyword id="KW-1053">Target membrane</keyword>
<sequence length="109" mass="12539">MKCLFGFLFIMLVAFLQDVHGVDSCIGKPCKVKGEDMKDIKEKKIEDIKEEIKNVKKEIFEDVDDELLDDNIRDDKIRDAKPSLRRVHWTRIRPGIPAVIKIGSSIGKK</sequence>
<feature type="signal peptide" evidence="2">
    <location>
        <begin position="1"/>
        <end position="21"/>
    </location>
</feature>
<feature type="propeptide" id="PRO_0000461979" evidence="1">
    <location>
        <begin position="22"/>
        <end position="77"/>
    </location>
</feature>
<feature type="peptide" id="PRO_5004490201" description="Arminin 6560" evidence="1">
    <location>
        <begin position="78"/>
        <end position="106"/>
    </location>
</feature>
<feature type="modified residue" description="Isoleucine amide" evidence="1">
    <location>
        <position position="106"/>
    </location>
</feature>